<comment type="function">
    <text evidence="1">Functions in the N-end rule pathway of protein degradation where it conjugates Leu from its aminoacyl-tRNA to the N-termini of proteins containing an N-terminal aspartate or glutamate.</text>
</comment>
<comment type="catalytic activity">
    <reaction evidence="1">
        <text>N-terminal L-glutamyl-[protein] + L-leucyl-tRNA(Leu) = N-terminal L-leucyl-L-glutamyl-[protein] + tRNA(Leu) + H(+)</text>
        <dbReference type="Rhea" id="RHEA:50412"/>
        <dbReference type="Rhea" id="RHEA-COMP:9613"/>
        <dbReference type="Rhea" id="RHEA-COMP:9622"/>
        <dbReference type="Rhea" id="RHEA-COMP:12664"/>
        <dbReference type="Rhea" id="RHEA-COMP:12668"/>
        <dbReference type="ChEBI" id="CHEBI:15378"/>
        <dbReference type="ChEBI" id="CHEBI:64721"/>
        <dbReference type="ChEBI" id="CHEBI:78442"/>
        <dbReference type="ChEBI" id="CHEBI:78494"/>
        <dbReference type="ChEBI" id="CHEBI:133041"/>
        <dbReference type="EC" id="2.3.2.29"/>
    </reaction>
</comment>
<comment type="catalytic activity">
    <reaction evidence="1">
        <text>N-terminal L-aspartyl-[protein] + L-leucyl-tRNA(Leu) = N-terminal L-leucyl-L-aspartyl-[protein] + tRNA(Leu) + H(+)</text>
        <dbReference type="Rhea" id="RHEA:50420"/>
        <dbReference type="Rhea" id="RHEA-COMP:9613"/>
        <dbReference type="Rhea" id="RHEA-COMP:9622"/>
        <dbReference type="Rhea" id="RHEA-COMP:12669"/>
        <dbReference type="Rhea" id="RHEA-COMP:12674"/>
        <dbReference type="ChEBI" id="CHEBI:15378"/>
        <dbReference type="ChEBI" id="CHEBI:64720"/>
        <dbReference type="ChEBI" id="CHEBI:78442"/>
        <dbReference type="ChEBI" id="CHEBI:78494"/>
        <dbReference type="ChEBI" id="CHEBI:133042"/>
        <dbReference type="EC" id="2.3.2.29"/>
    </reaction>
</comment>
<comment type="subcellular location">
    <subcellularLocation>
        <location evidence="1">Cytoplasm</location>
    </subcellularLocation>
</comment>
<comment type="similarity">
    <text evidence="1">Belongs to the R-transferase family. Bpt subfamily.</text>
</comment>
<sequence>MTQHSRNTPQFYLTAPTPCPYLEGFQERKVFTHLVGDKAGELNDLLTHGGFRRSQSIAYRPACDLCRACVSVRVIAGEFEPSRNLRKVLHRNADLVGEMRNAVPTSEQYSIFRAYLDARHHDGGMADMTVLDYAMMVEDTHVTTRIVEYRRRTDSGKQGGELVAAALTDVLGDGLSMVYSFFDPDVDDRSLGTFMILDHIARARSMGLPYVYLGYWIEGSSKMSYKARFLPQQRLSPNGWLRVDATGIATQD</sequence>
<accession>B6JGH2</accession>
<accession>F8BXN1</accession>
<feature type="chain" id="PRO_1000131987" description="Aspartate/glutamate leucyltransferase">
    <location>
        <begin position="1"/>
        <end position="252"/>
    </location>
</feature>
<organism>
    <name type="scientific">Afipia carboxidovorans (strain ATCC 49405 / DSM 1227 / KCTC 32145 / OM5)</name>
    <name type="common">Oligotropha carboxidovorans</name>
    <dbReference type="NCBI Taxonomy" id="504832"/>
    <lineage>
        <taxon>Bacteria</taxon>
        <taxon>Pseudomonadati</taxon>
        <taxon>Pseudomonadota</taxon>
        <taxon>Alphaproteobacteria</taxon>
        <taxon>Hyphomicrobiales</taxon>
        <taxon>Nitrobacteraceae</taxon>
        <taxon>Afipia</taxon>
    </lineage>
</organism>
<proteinExistence type="inferred from homology"/>
<evidence type="ECO:0000255" key="1">
    <source>
        <dbReference type="HAMAP-Rule" id="MF_00689"/>
    </source>
</evidence>
<reference key="1">
    <citation type="journal article" date="2008" name="J. Bacteriol.">
        <title>Genome sequence of the chemolithoautotrophic bacterium Oligotropha carboxidovorans OM5T.</title>
        <authorList>
            <person name="Paul D."/>
            <person name="Bridges S."/>
            <person name="Burgess S.C."/>
            <person name="Dandass Y."/>
            <person name="Lawrence M.L."/>
        </authorList>
    </citation>
    <scope>NUCLEOTIDE SEQUENCE [LARGE SCALE GENOMIC DNA]</scope>
    <source>
        <strain>ATCC 49405 / DSM 1227 / KCTC 32145 / OM5</strain>
    </source>
</reference>
<reference key="2">
    <citation type="journal article" date="2011" name="J. Bacteriol.">
        <title>Complete genome sequences of the chemolithoautotrophic Oligotropha carboxidovorans strains OM4 and OM5.</title>
        <authorList>
            <person name="Volland S."/>
            <person name="Rachinger M."/>
            <person name="Strittmatter A."/>
            <person name="Daniel R."/>
            <person name="Gottschalk G."/>
            <person name="Meyer O."/>
        </authorList>
    </citation>
    <scope>NUCLEOTIDE SEQUENCE [LARGE SCALE GENOMIC DNA]</scope>
    <source>
        <strain>ATCC 49405 / DSM 1227 / KCTC 32145 / OM5</strain>
    </source>
</reference>
<dbReference type="EC" id="2.3.2.29" evidence="1"/>
<dbReference type="EMBL" id="CP001196">
    <property type="protein sequence ID" value="ACI92978.1"/>
    <property type="molecule type" value="Genomic_DNA"/>
</dbReference>
<dbReference type="EMBL" id="CP002826">
    <property type="protein sequence ID" value="AEI06868.1"/>
    <property type="molecule type" value="Genomic_DNA"/>
</dbReference>
<dbReference type="RefSeq" id="WP_012563005.1">
    <property type="nucleotide sequence ID" value="NC_015684.1"/>
</dbReference>
<dbReference type="SMR" id="B6JGH2"/>
<dbReference type="STRING" id="504832.OCA5_c21650"/>
<dbReference type="KEGG" id="oca:OCAR_5853"/>
<dbReference type="KEGG" id="ocg:OCA5_c21650"/>
<dbReference type="PATRIC" id="fig|504832.7.peg.2286"/>
<dbReference type="eggNOG" id="COG2935">
    <property type="taxonomic scope" value="Bacteria"/>
</dbReference>
<dbReference type="HOGENOM" id="CLU_077607_1_0_5"/>
<dbReference type="OrthoDB" id="9782022at2"/>
<dbReference type="Proteomes" id="UP000007730">
    <property type="component" value="Chromosome"/>
</dbReference>
<dbReference type="GO" id="GO:0005737">
    <property type="term" value="C:cytoplasm"/>
    <property type="evidence" value="ECO:0007669"/>
    <property type="project" value="UniProtKB-SubCell"/>
</dbReference>
<dbReference type="GO" id="GO:0004057">
    <property type="term" value="F:arginyl-tRNA--protein transferase activity"/>
    <property type="evidence" value="ECO:0007669"/>
    <property type="project" value="InterPro"/>
</dbReference>
<dbReference type="GO" id="GO:0008914">
    <property type="term" value="F:leucyl-tRNA--protein transferase activity"/>
    <property type="evidence" value="ECO:0007669"/>
    <property type="project" value="UniProtKB-UniRule"/>
</dbReference>
<dbReference type="GO" id="GO:0071596">
    <property type="term" value="P:ubiquitin-dependent protein catabolic process via the N-end rule pathway"/>
    <property type="evidence" value="ECO:0007669"/>
    <property type="project" value="InterPro"/>
</dbReference>
<dbReference type="HAMAP" id="MF_00689">
    <property type="entry name" value="Bpt"/>
    <property type="match status" value="1"/>
</dbReference>
<dbReference type="InterPro" id="IPR016181">
    <property type="entry name" value="Acyl_CoA_acyltransferase"/>
</dbReference>
<dbReference type="InterPro" id="IPR017138">
    <property type="entry name" value="Asp_Glu_LeuTrfase"/>
</dbReference>
<dbReference type="InterPro" id="IPR030700">
    <property type="entry name" value="N-end_Aminoacyl_Trfase"/>
</dbReference>
<dbReference type="InterPro" id="IPR007472">
    <property type="entry name" value="N-end_Aminoacyl_Trfase_C"/>
</dbReference>
<dbReference type="InterPro" id="IPR007471">
    <property type="entry name" value="N-end_Aminoacyl_Trfase_N"/>
</dbReference>
<dbReference type="NCBIfam" id="NF002343">
    <property type="entry name" value="PRK01305.1-4"/>
    <property type="match status" value="1"/>
</dbReference>
<dbReference type="NCBIfam" id="NF002346">
    <property type="entry name" value="PRK01305.2-3"/>
    <property type="match status" value="1"/>
</dbReference>
<dbReference type="PANTHER" id="PTHR21367">
    <property type="entry name" value="ARGININE-TRNA-PROTEIN TRANSFERASE 1"/>
    <property type="match status" value="1"/>
</dbReference>
<dbReference type="PANTHER" id="PTHR21367:SF1">
    <property type="entry name" value="ARGINYL-TRNA--PROTEIN TRANSFERASE 1"/>
    <property type="match status" value="1"/>
</dbReference>
<dbReference type="Pfam" id="PF04377">
    <property type="entry name" value="ATE_C"/>
    <property type="match status" value="1"/>
</dbReference>
<dbReference type="Pfam" id="PF04376">
    <property type="entry name" value="ATE_N"/>
    <property type="match status" value="1"/>
</dbReference>
<dbReference type="PIRSF" id="PIRSF037208">
    <property type="entry name" value="ATE_pro_prd"/>
    <property type="match status" value="1"/>
</dbReference>
<dbReference type="SUPFAM" id="SSF55729">
    <property type="entry name" value="Acyl-CoA N-acyltransferases (Nat)"/>
    <property type="match status" value="1"/>
</dbReference>
<protein>
    <recommendedName>
        <fullName evidence="1">Aspartate/glutamate leucyltransferase</fullName>
        <ecNumber evidence="1">2.3.2.29</ecNumber>
    </recommendedName>
</protein>
<keyword id="KW-0012">Acyltransferase</keyword>
<keyword id="KW-0963">Cytoplasm</keyword>
<keyword id="KW-1185">Reference proteome</keyword>
<keyword id="KW-0808">Transferase</keyword>
<name>BPT_AFIC5</name>
<gene>
    <name evidence="1" type="primary">bpt</name>
    <name type="ordered locus">OCAR_5853</name>
    <name type="ordered locus">OCA5_c21650</name>
</gene>